<accession>B2U764</accession>
<organism>
    <name type="scientific">Ralstonia pickettii (strain 12J)</name>
    <dbReference type="NCBI Taxonomy" id="402626"/>
    <lineage>
        <taxon>Bacteria</taxon>
        <taxon>Pseudomonadati</taxon>
        <taxon>Pseudomonadota</taxon>
        <taxon>Betaproteobacteria</taxon>
        <taxon>Burkholderiales</taxon>
        <taxon>Burkholderiaceae</taxon>
        <taxon>Ralstonia</taxon>
    </lineage>
</organism>
<protein>
    <recommendedName>
        <fullName evidence="1">Thiazole synthase</fullName>
        <ecNumber evidence="1">2.8.1.10</ecNumber>
    </recommendedName>
</protein>
<proteinExistence type="inferred from homology"/>
<comment type="function">
    <text evidence="1">Catalyzes the rearrangement of 1-deoxy-D-xylulose 5-phosphate (DXP) to produce the thiazole phosphate moiety of thiamine. Sulfur is provided by the thiocarboxylate moiety of the carrier protein ThiS. In vitro, sulfur can be provided by H(2)S.</text>
</comment>
<comment type="catalytic activity">
    <reaction evidence="1">
        <text>[ThiS sulfur-carrier protein]-C-terminal-Gly-aminoethanethioate + 2-iminoacetate + 1-deoxy-D-xylulose 5-phosphate = [ThiS sulfur-carrier protein]-C-terminal Gly-Gly + 2-[(2R,5Z)-2-carboxy-4-methylthiazol-5(2H)-ylidene]ethyl phosphate + 2 H2O + H(+)</text>
        <dbReference type="Rhea" id="RHEA:26297"/>
        <dbReference type="Rhea" id="RHEA-COMP:12909"/>
        <dbReference type="Rhea" id="RHEA-COMP:19908"/>
        <dbReference type="ChEBI" id="CHEBI:15377"/>
        <dbReference type="ChEBI" id="CHEBI:15378"/>
        <dbReference type="ChEBI" id="CHEBI:57792"/>
        <dbReference type="ChEBI" id="CHEBI:62899"/>
        <dbReference type="ChEBI" id="CHEBI:77846"/>
        <dbReference type="ChEBI" id="CHEBI:90778"/>
        <dbReference type="ChEBI" id="CHEBI:232372"/>
        <dbReference type="EC" id="2.8.1.10"/>
    </reaction>
</comment>
<comment type="pathway">
    <text evidence="1">Cofactor biosynthesis; thiamine diphosphate biosynthesis.</text>
</comment>
<comment type="subunit">
    <text evidence="1">Homotetramer. Forms heterodimers with either ThiH or ThiS.</text>
</comment>
<comment type="subcellular location">
    <subcellularLocation>
        <location evidence="1">Cytoplasm</location>
    </subcellularLocation>
</comment>
<comment type="similarity">
    <text evidence="1">Belongs to the ThiG family.</text>
</comment>
<name>THIG_RALPJ</name>
<reference key="1">
    <citation type="submission" date="2008-05" db="EMBL/GenBank/DDBJ databases">
        <title>Complete sequence of chromosome 1 of Ralstonia pickettii 12J.</title>
        <authorList>
            <person name="Lucas S."/>
            <person name="Copeland A."/>
            <person name="Lapidus A."/>
            <person name="Glavina del Rio T."/>
            <person name="Dalin E."/>
            <person name="Tice H."/>
            <person name="Bruce D."/>
            <person name="Goodwin L."/>
            <person name="Pitluck S."/>
            <person name="Meincke L."/>
            <person name="Brettin T."/>
            <person name="Detter J.C."/>
            <person name="Han C."/>
            <person name="Kuske C.R."/>
            <person name="Schmutz J."/>
            <person name="Larimer F."/>
            <person name="Land M."/>
            <person name="Hauser L."/>
            <person name="Kyrpides N."/>
            <person name="Mikhailova N."/>
            <person name="Marsh T."/>
            <person name="Richardson P."/>
        </authorList>
    </citation>
    <scope>NUCLEOTIDE SEQUENCE [LARGE SCALE GENOMIC DNA]</scope>
    <source>
        <strain>12J</strain>
    </source>
</reference>
<evidence type="ECO:0000255" key="1">
    <source>
        <dbReference type="HAMAP-Rule" id="MF_00443"/>
    </source>
</evidence>
<keyword id="KW-0963">Cytoplasm</keyword>
<keyword id="KW-0704">Schiff base</keyword>
<keyword id="KW-0784">Thiamine biosynthesis</keyword>
<keyword id="KW-0808">Transferase</keyword>
<gene>
    <name evidence="1" type="primary">thiG</name>
    <name type="ordered locus">Rpic_3645</name>
</gene>
<dbReference type="EC" id="2.8.1.10" evidence="1"/>
<dbReference type="EMBL" id="CP001068">
    <property type="protein sequence ID" value="ACD28764.1"/>
    <property type="molecule type" value="Genomic_DNA"/>
</dbReference>
<dbReference type="SMR" id="B2U764"/>
<dbReference type="STRING" id="402626.Rpic_3645"/>
<dbReference type="KEGG" id="rpi:Rpic_3645"/>
<dbReference type="PATRIC" id="fig|402626.5.peg.4781"/>
<dbReference type="eggNOG" id="COG2022">
    <property type="taxonomic scope" value="Bacteria"/>
</dbReference>
<dbReference type="HOGENOM" id="CLU_062233_1_0_4"/>
<dbReference type="UniPathway" id="UPA00060"/>
<dbReference type="GO" id="GO:0005737">
    <property type="term" value="C:cytoplasm"/>
    <property type="evidence" value="ECO:0007669"/>
    <property type="project" value="UniProtKB-SubCell"/>
</dbReference>
<dbReference type="GO" id="GO:1990107">
    <property type="term" value="F:thiazole synthase activity"/>
    <property type="evidence" value="ECO:0007669"/>
    <property type="project" value="UniProtKB-EC"/>
</dbReference>
<dbReference type="GO" id="GO:0009229">
    <property type="term" value="P:thiamine diphosphate biosynthetic process"/>
    <property type="evidence" value="ECO:0007669"/>
    <property type="project" value="UniProtKB-UniRule"/>
</dbReference>
<dbReference type="CDD" id="cd04728">
    <property type="entry name" value="ThiG"/>
    <property type="match status" value="1"/>
</dbReference>
<dbReference type="Gene3D" id="3.20.20.70">
    <property type="entry name" value="Aldolase class I"/>
    <property type="match status" value="1"/>
</dbReference>
<dbReference type="HAMAP" id="MF_00443">
    <property type="entry name" value="ThiG"/>
    <property type="match status" value="1"/>
</dbReference>
<dbReference type="InterPro" id="IPR013785">
    <property type="entry name" value="Aldolase_TIM"/>
</dbReference>
<dbReference type="InterPro" id="IPR033983">
    <property type="entry name" value="Thiazole_synthase_ThiG"/>
</dbReference>
<dbReference type="InterPro" id="IPR008867">
    <property type="entry name" value="ThiG"/>
</dbReference>
<dbReference type="PANTHER" id="PTHR34266">
    <property type="entry name" value="THIAZOLE SYNTHASE"/>
    <property type="match status" value="1"/>
</dbReference>
<dbReference type="PANTHER" id="PTHR34266:SF2">
    <property type="entry name" value="THIAZOLE SYNTHASE"/>
    <property type="match status" value="1"/>
</dbReference>
<dbReference type="Pfam" id="PF05690">
    <property type="entry name" value="ThiG"/>
    <property type="match status" value="1"/>
</dbReference>
<dbReference type="SUPFAM" id="SSF110399">
    <property type="entry name" value="ThiG-like"/>
    <property type="match status" value="1"/>
</dbReference>
<feature type="chain" id="PRO_1000196888" description="Thiazole synthase">
    <location>
        <begin position="1"/>
        <end position="275"/>
    </location>
</feature>
<feature type="active site" description="Schiff-base intermediate with DXP" evidence="1">
    <location>
        <position position="108"/>
    </location>
</feature>
<feature type="binding site" evidence="1">
    <location>
        <position position="169"/>
    </location>
    <ligand>
        <name>1-deoxy-D-xylulose 5-phosphate</name>
        <dbReference type="ChEBI" id="CHEBI:57792"/>
    </ligand>
</feature>
<feature type="binding site" evidence="1">
    <location>
        <begin position="196"/>
        <end position="197"/>
    </location>
    <ligand>
        <name>1-deoxy-D-xylulose 5-phosphate</name>
        <dbReference type="ChEBI" id="CHEBI:57792"/>
    </ligand>
</feature>
<feature type="binding site" evidence="1">
    <location>
        <begin position="218"/>
        <end position="219"/>
    </location>
    <ligand>
        <name>1-deoxy-D-xylulose 5-phosphate</name>
        <dbReference type="ChEBI" id="CHEBI:57792"/>
    </ligand>
</feature>
<sequence>MTTTNLSAVADPLRLYDETFASRLLLGTARYPSPQSLEDAVRVSNPAMLTVALRRQSAGSPEGGAGFWKMLRELGVPVLPNTAGCYSADEAYTLAQMSRELFETDWIKLEVIGDDYTLQPDTLALPAAAERLIRDGFKVLPYCTEDLVLCRRLLDVGCQALMPWAAPIGTGRGPTNPYGLRLLRERLPNVPLIVDAGLGVPSHATQVMEWGYDAVLLNTAVAQAGDPVAMAQAFAMATQAGRLARLSGPMPERDVAQASTPVVGLPFWHAEEKQA</sequence>